<proteinExistence type="inferred from homology"/>
<name>ASNA_PARD8</name>
<protein>
    <recommendedName>
        <fullName evidence="1">Aspartate--ammonia ligase</fullName>
        <ecNumber evidence="1">6.3.1.1</ecNumber>
    </recommendedName>
    <alternativeName>
        <fullName evidence="1">Asparagine synthetase A</fullName>
    </alternativeName>
</protein>
<sequence>MSYLIKPAGYKALLNLSQTEMGIKKIKDFFQQNLSSELRLRRVTAPLFVLKGMGINDDLNGTERAVTFPIKDLNDSKAEIVHSLAKWKRLTLADYHIEEGYGIYTDMNAIRSDEELGNLHSLYVDQWDWERVMSESERKIDFLKEIVRRIYAAMVRTEYLVYEMFPQIRPTLPQQIHFIHSEDLLQKYPTFTPKEREDAITKEYGAVFIIGIGCSLSNGEKHDGRAPDYDDWSTIAENGQTGLNGDLLVWDDVLNRSMELSSMGIRVNKEALLRQLDICKAGEKKELYFHKRLLSGELPQSIGGGIGQSRLCMFYLRKAHIGEIQASIWPEEMRKEARAAGMMLI</sequence>
<reference key="1">
    <citation type="journal article" date="2007" name="PLoS Biol.">
        <title>Evolution of symbiotic bacteria in the distal human intestine.</title>
        <authorList>
            <person name="Xu J."/>
            <person name="Mahowald M.A."/>
            <person name="Ley R.E."/>
            <person name="Lozupone C.A."/>
            <person name="Hamady M."/>
            <person name="Martens E.C."/>
            <person name="Henrissat B."/>
            <person name="Coutinho P.M."/>
            <person name="Minx P."/>
            <person name="Latreille P."/>
            <person name="Cordum H."/>
            <person name="Van Brunt A."/>
            <person name="Kim K."/>
            <person name="Fulton R.S."/>
            <person name="Fulton L.A."/>
            <person name="Clifton S.W."/>
            <person name="Wilson R.K."/>
            <person name="Knight R.D."/>
            <person name="Gordon J.I."/>
        </authorList>
    </citation>
    <scope>NUCLEOTIDE SEQUENCE [LARGE SCALE GENOMIC DNA]</scope>
    <source>
        <strain>ATCC 8503 / DSM 20701 / CIP 104284 / JCM 5825 / NCTC 11152</strain>
    </source>
</reference>
<feature type="chain" id="PRO_1000017955" description="Aspartate--ammonia ligase">
    <location>
        <begin position="1"/>
        <end position="345"/>
    </location>
</feature>
<comment type="catalytic activity">
    <reaction evidence="1">
        <text>L-aspartate + NH4(+) + ATP = L-asparagine + AMP + diphosphate + H(+)</text>
        <dbReference type="Rhea" id="RHEA:11372"/>
        <dbReference type="ChEBI" id="CHEBI:15378"/>
        <dbReference type="ChEBI" id="CHEBI:28938"/>
        <dbReference type="ChEBI" id="CHEBI:29991"/>
        <dbReference type="ChEBI" id="CHEBI:30616"/>
        <dbReference type="ChEBI" id="CHEBI:33019"/>
        <dbReference type="ChEBI" id="CHEBI:58048"/>
        <dbReference type="ChEBI" id="CHEBI:456215"/>
        <dbReference type="EC" id="6.3.1.1"/>
    </reaction>
</comment>
<comment type="pathway">
    <text evidence="1">Amino-acid biosynthesis; L-asparagine biosynthesis; L-asparagine from L-aspartate (ammonia route): step 1/1.</text>
</comment>
<comment type="subcellular location">
    <subcellularLocation>
        <location evidence="1">Cytoplasm</location>
    </subcellularLocation>
</comment>
<comment type="similarity">
    <text evidence="1">Belongs to the class-II aminoacyl-tRNA synthetase family. AsnA subfamily.</text>
</comment>
<accession>A6LI95</accession>
<gene>
    <name evidence="1" type="primary">asnA</name>
    <name type="ordered locus">BDI_3717</name>
</gene>
<dbReference type="EC" id="6.3.1.1" evidence="1"/>
<dbReference type="EMBL" id="CP000140">
    <property type="protein sequence ID" value="ABR45409.1"/>
    <property type="molecule type" value="Genomic_DNA"/>
</dbReference>
<dbReference type="RefSeq" id="WP_005858945.1">
    <property type="nucleotide sequence ID" value="NZ_LR215978.1"/>
</dbReference>
<dbReference type="SMR" id="A6LI95"/>
<dbReference type="STRING" id="435591.BDI_3717"/>
<dbReference type="PaxDb" id="435591-BDI_3717"/>
<dbReference type="KEGG" id="pdi:BDI_3717"/>
<dbReference type="eggNOG" id="COG2502">
    <property type="taxonomic scope" value="Bacteria"/>
</dbReference>
<dbReference type="HOGENOM" id="CLU_071543_0_0_10"/>
<dbReference type="BioCyc" id="PDIS435591:G1G5A-3812-MONOMER"/>
<dbReference type="UniPathway" id="UPA00134">
    <property type="reaction ID" value="UER00194"/>
</dbReference>
<dbReference type="Proteomes" id="UP000000566">
    <property type="component" value="Chromosome"/>
</dbReference>
<dbReference type="GO" id="GO:0005829">
    <property type="term" value="C:cytosol"/>
    <property type="evidence" value="ECO:0007669"/>
    <property type="project" value="TreeGrafter"/>
</dbReference>
<dbReference type="GO" id="GO:0004071">
    <property type="term" value="F:aspartate-ammonia ligase activity"/>
    <property type="evidence" value="ECO:0007669"/>
    <property type="project" value="UniProtKB-UniRule"/>
</dbReference>
<dbReference type="GO" id="GO:0005524">
    <property type="term" value="F:ATP binding"/>
    <property type="evidence" value="ECO:0007669"/>
    <property type="project" value="UniProtKB-UniRule"/>
</dbReference>
<dbReference type="GO" id="GO:0070981">
    <property type="term" value="P:L-asparagine biosynthetic process"/>
    <property type="evidence" value="ECO:0007669"/>
    <property type="project" value="UniProtKB-UniRule"/>
</dbReference>
<dbReference type="CDD" id="cd00645">
    <property type="entry name" value="AsnA"/>
    <property type="match status" value="1"/>
</dbReference>
<dbReference type="Gene3D" id="3.30.930.10">
    <property type="entry name" value="Bira Bifunctional Protein, Domain 2"/>
    <property type="match status" value="1"/>
</dbReference>
<dbReference type="HAMAP" id="MF_00555">
    <property type="entry name" value="AsnA"/>
    <property type="match status" value="1"/>
</dbReference>
<dbReference type="InterPro" id="IPR006195">
    <property type="entry name" value="aa-tRNA-synth_II"/>
</dbReference>
<dbReference type="InterPro" id="IPR045864">
    <property type="entry name" value="aa-tRNA-synth_II/BPL/LPL"/>
</dbReference>
<dbReference type="InterPro" id="IPR004618">
    <property type="entry name" value="AsnA"/>
</dbReference>
<dbReference type="NCBIfam" id="TIGR00669">
    <property type="entry name" value="asnA"/>
    <property type="match status" value="1"/>
</dbReference>
<dbReference type="PANTHER" id="PTHR30073">
    <property type="entry name" value="ASPARTATE--AMMONIA LIGASE"/>
    <property type="match status" value="1"/>
</dbReference>
<dbReference type="PANTHER" id="PTHR30073:SF5">
    <property type="entry name" value="ASPARTATE--AMMONIA LIGASE"/>
    <property type="match status" value="1"/>
</dbReference>
<dbReference type="Pfam" id="PF03590">
    <property type="entry name" value="AsnA"/>
    <property type="match status" value="1"/>
</dbReference>
<dbReference type="PIRSF" id="PIRSF001555">
    <property type="entry name" value="Asp_ammon_ligase"/>
    <property type="match status" value="1"/>
</dbReference>
<dbReference type="SUPFAM" id="SSF55681">
    <property type="entry name" value="Class II aaRS and biotin synthetases"/>
    <property type="match status" value="1"/>
</dbReference>
<dbReference type="PROSITE" id="PS50862">
    <property type="entry name" value="AA_TRNA_LIGASE_II"/>
    <property type="match status" value="1"/>
</dbReference>
<organism>
    <name type="scientific">Parabacteroides distasonis (strain ATCC 8503 / DSM 20701 / CIP 104284 / JCM 5825 / NCTC 11152)</name>
    <dbReference type="NCBI Taxonomy" id="435591"/>
    <lineage>
        <taxon>Bacteria</taxon>
        <taxon>Pseudomonadati</taxon>
        <taxon>Bacteroidota</taxon>
        <taxon>Bacteroidia</taxon>
        <taxon>Bacteroidales</taxon>
        <taxon>Tannerellaceae</taxon>
        <taxon>Parabacteroides</taxon>
    </lineage>
</organism>
<keyword id="KW-0028">Amino-acid biosynthesis</keyword>
<keyword id="KW-0061">Asparagine biosynthesis</keyword>
<keyword id="KW-0067">ATP-binding</keyword>
<keyword id="KW-0963">Cytoplasm</keyword>
<keyword id="KW-0436">Ligase</keyword>
<keyword id="KW-0547">Nucleotide-binding</keyword>
<keyword id="KW-1185">Reference proteome</keyword>
<evidence type="ECO:0000255" key="1">
    <source>
        <dbReference type="HAMAP-Rule" id="MF_00555"/>
    </source>
</evidence>